<proteinExistence type="inferred from homology"/>
<organismHost>
    <name type="scientific">Acanthamoeba polyphaga</name>
    <name type="common">Amoeba</name>
    <dbReference type="NCBI Taxonomy" id="5757"/>
</organismHost>
<gene>
    <name type="ordered locus">MIMI_R832</name>
</gene>
<reference key="1">
    <citation type="journal article" date="2004" name="Science">
        <title>The 1.2-megabase genome sequence of Mimivirus.</title>
        <authorList>
            <person name="Raoult D."/>
            <person name="Audic S."/>
            <person name="Robert C."/>
            <person name="Abergel C."/>
            <person name="Renesto P."/>
            <person name="Ogata H."/>
            <person name="La Scola B."/>
            <person name="Susan M."/>
            <person name="Claverie J.-M."/>
        </authorList>
    </citation>
    <scope>NUCLEOTIDE SEQUENCE [LARGE SCALE GENOMIC DNA]</scope>
    <source>
        <strain>Rowbotham-Bradford</strain>
    </source>
</reference>
<protein>
    <recommendedName>
        <fullName>Putative truncated GMC-type inactive oxidoreductase R832</fullName>
    </recommendedName>
</protein>
<dbReference type="EMBL" id="AY653733">
    <property type="protein sequence ID" value="AAV51090.1"/>
    <property type="molecule type" value="Genomic_DNA"/>
</dbReference>
<dbReference type="SMR" id="Q5UQH9"/>
<dbReference type="Proteomes" id="UP000001134">
    <property type="component" value="Genome"/>
</dbReference>
<dbReference type="GO" id="GO:0050660">
    <property type="term" value="F:flavin adenine dinucleotide binding"/>
    <property type="evidence" value="ECO:0007669"/>
    <property type="project" value="InterPro"/>
</dbReference>
<dbReference type="GO" id="GO:0016614">
    <property type="term" value="F:oxidoreductase activity, acting on CH-OH group of donors"/>
    <property type="evidence" value="ECO:0007669"/>
    <property type="project" value="InterPro"/>
</dbReference>
<dbReference type="Gene3D" id="3.30.410.40">
    <property type="match status" value="1"/>
</dbReference>
<dbReference type="Gene3D" id="3.50.50.60">
    <property type="entry name" value="FAD/NAD(P)-binding domain"/>
    <property type="match status" value="1"/>
</dbReference>
<dbReference type="InterPro" id="IPR036188">
    <property type="entry name" value="FAD/NAD-bd_sf"/>
</dbReference>
<dbReference type="InterPro" id="IPR012132">
    <property type="entry name" value="GMC_OxRdtase"/>
</dbReference>
<dbReference type="InterPro" id="IPR000172">
    <property type="entry name" value="GMC_OxRdtase_N"/>
</dbReference>
<dbReference type="PANTHER" id="PTHR11552:SF147">
    <property type="entry name" value="CHOLINE DEHYDROGENASE, MITOCHONDRIAL"/>
    <property type="match status" value="1"/>
</dbReference>
<dbReference type="PANTHER" id="PTHR11552">
    <property type="entry name" value="GLUCOSE-METHANOL-CHOLINE GMC OXIDOREDUCTASE"/>
    <property type="match status" value="1"/>
</dbReference>
<dbReference type="Pfam" id="PF00732">
    <property type="entry name" value="GMC_oxred_N"/>
    <property type="match status" value="1"/>
</dbReference>
<dbReference type="SUPFAM" id="SSF51905">
    <property type="entry name" value="FAD/NAD(P)-binding domain"/>
    <property type="match status" value="1"/>
</dbReference>
<dbReference type="PROSITE" id="PS00624">
    <property type="entry name" value="GMC_OXRED_2"/>
    <property type="match status" value="1"/>
</dbReference>
<comment type="cofactor">
    <cofactor evidence="1">
        <name>FAD</name>
        <dbReference type="ChEBI" id="CHEBI:57692"/>
    </cofactor>
</comment>
<comment type="similarity">
    <text evidence="3">Belongs to the GMC oxidoreductase family.</text>
</comment>
<comment type="caution">
    <text evidence="3">The two ORFs R832 and R833 correspond respectively to the N- and C-terminal of a GMC-type oxidoreductase.</text>
</comment>
<feature type="signal peptide" evidence="2">
    <location>
        <begin position="1"/>
        <end position="20"/>
    </location>
</feature>
<feature type="chain" id="PRO_0000243953" description="Putative truncated GMC-type inactive oxidoreductase R832">
    <location>
        <begin position="21"/>
        <end position="414"/>
    </location>
</feature>
<feature type="binding site" evidence="1">
    <location>
        <begin position="38"/>
        <end position="67"/>
    </location>
    <ligand>
        <name>FAD</name>
        <dbReference type="ChEBI" id="CHEBI:57692"/>
    </ligand>
</feature>
<organism>
    <name type="scientific">Acanthamoeba polyphaga mimivirus</name>
    <name type="common">APMV</name>
    <dbReference type="NCBI Taxonomy" id="212035"/>
    <lineage>
        <taxon>Viruses</taxon>
        <taxon>Varidnaviria</taxon>
        <taxon>Bamfordvirae</taxon>
        <taxon>Nucleocytoviricota</taxon>
        <taxon>Megaviricetes</taxon>
        <taxon>Imitervirales</taxon>
        <taxon>Mimiviridae</taxon>
        <taxon>Megamimivirinae</taxon>
        <taxon>Mimivirus</taxon>
        <taxon>Mimivirus bradfordmassiliense</taxon>
    </lineage>
</organism>
<sequence length="414" mass="45735">MNPTKLFLVFVAFAFAIINALPVCRQGTFDPDYNGIPDYIIVGSGPGGSRAVQQCIAKGHKCTLVERGYDYFEVPYVQTPSASFLVYSSPAVRYASTVSAKNLFNLTVNAIEANVVGGASSINGLIVVITDIDNFYRELNITGWSYEELLPRYLELMTSLNRPEHTGPLDVSDTPVSDPAYQAYRNAIRQVFPNIPERLPDMNTAFANQNGTNFPGFGPPETSTKTTYMNFAGANVPIVSYRESAYMAFVHPIRNHPNFRLMTRSRVDKVVFDVCKTRARKVIVTATNYFGSQYQCELTARYGIVLAAGAIRTPQILLQSGIGPANELSALGISVVKNLTDVGRHLDDHPTIVRQYIGPIPDNYYSANINGHAYWNYQDNASVIPNWAMQIAGVPGINFKTVLSVLQIRNHVVQ</sequence>
<name>YR832_MIMIV</name>
<evidence type="ECO:0000250" key="1"/>
<evidence type="ECO:0000255" key="2"/>
<evidence type="ECO:0000305" key="3"/>
<accession>Q5UQH9</accession>
<keyword id="KW-0274">FAD</keyword>
<keyword id="KW-0285">Flavoprotein</keyword>
<keyword id="KW-1185">Reference proteome</keyword>
<keyword id="KW-0732">Signal</keyword>